<accession>B1IQ13</accession>
<sequence>MSVLQVLHIPDERLRKVAKPVEEVNAEIQRIVDDMFETMYAEEGIGLAATQVDIHQRIIVIDVSENRDERLVLINPELLEKSGETGIEEGCLSIPEQRALVPRAEKVKIRALDRDGKPFELEADGLLAICIQHEMDHLVGKLFMDYLSPLKQQRIRQKVEKLDRLKARA</sequence>
<protein>
    <recommendedName>
        <fullName evidence="1">Peptide deformylase</fullName>
        <shortName evidence="1">PDF</shortName>
        <ecNumber evidence="1">3.5.1.88</ecNumber>
    </recommendedName>
    <alternativeName>
        <fullName evidence="1">Polypeptide deformylase</fullName>
    </alternativeName>
</protein>
<dbReference type="EC" id="3.5.1.88" evidence="1"/>
<dbReference type="EMBL" id="CP000946">
    <property type="protein sequence ID" value="ACA76105.1"/>
    <property type="molecule type" value="Genomic_DNA"/>
</dbReference>
<dbReference type="RefSeq" id="WP_000114984.1">
    <property type="nucleotide sequence ID" value="NZ_MTFT01000014.1"/>
</dbReference>
<dbReference type="SMR" id="B1IQ13"/>
<dbReference type="GeneID" id="89518132"/>
<dbReference type="KEGG" id="ecl:EcolC_0427"/>
<dbReference type="HOGENOM" id="CLU_061901_2_1_6"/>
<dbReference type="GO" id="GO:0046872">
    <property type="term" value="F:metal ion binding"/>
    <property type="evidence" value="ECO:0007669"/>
    <property type="project" value="UniProtKB-KW"/>
</dbReference>
<dbReference type="GO" id="GO:0042586">
    <property type="term" value="F:peptide deformylase activity"/>
    <property type="evidence" value="ECO:0007669"/>
    <property type="project" value="UniProtKB-UniRule"/>
</dbReference>
<dbReference type="GO" id="GO:0043686">
    <property type="term" value="P:co-translational protein modification"/>
    <property type="evidence" value="ECO:0007669"/>
    <property type="project" value="TreeGrafter"/>
</dbReference>
<dbReference type="GO" id="GO:0006412">
    <property type="term" value="P:translation"/>
    <property type="evidence" value="ECO:0007669"/>
    <property type="project" value="UniProtKB-UniRule"/>
</dbReference>
<dbReference type="CDD" id="cd00487">
    <property type="entry name" value="Pep_deformylase"/>
    <property type="match status" value="1"/>
</dbReference>
<dbReference type="FunFam" id="3.90.45.10:FF:000001">
    <property type="entry name" value="Peptide deformylase"/>
    <property type="match status" value="1"/>
</dbReference>
<dbReference type="Gene3D" id="3.90.45.10">
    <property type="entry name" value="Peptide deformylase"/>
    <property type="match status" value="1"/>
</dbReference>
<dbReference type="HAMAP" id="MF_00163">
    <property type="entry name" value="Pep_deformylase"/>
    <property type="match status" value="1"/>
</dbReference>
<dbReference type="InterPro" id="IPR023635">
    <property type="entry name" value="Peptide_deformylase"/>
</dbReference>
<dbReference type="InterPro" id="IPR036821">
    <property type="entry name" value="Peptide_deformylase_sf"/>
</dbReference>
<dbReference type="NCBIfam" id="TIGR00079">
    <property type="entry name" value="pept_deformyl"/>
    <property type="match status" value="1"/>
</dbReference>
<dbReference type="NCBIfam" id="NF001159">
    <property type="entry name" value="PRK00150.1-3"/>
    <property type="match status" value="1"/>
</dbReference>
<dbReference type="PANTHER" id="PTHR10458">
    <property type="entry name" value="PEPTIDE DEFORMYLASE"/>
    <property type="match status" value="1"/>
</dbReference>
<dbReference type="PANTHER" id="PTHR10458:SF21">
    <property type="entry name" value="PEPTIDE DEFORMYLASE"/>
    <property type="match status" value="1"/>
</dbReference>
<dbReference type="Pfam" id="PF01327">
    <property type="entry name" value="Pep_deformylase"/>
    <property type="match status" value="1"/>
</dbReference>
<dbReference type="PIRSF" id="PIRSF004749">
    <property type="entry name" value="Pep_def"/>
    <property type="match status" value="1"/>
</dbReference>
<dbReference type="PRINTS" id="PR01576">
    <property type="entry name" value="PDEFORMYLASE"/>
</dbReference>
<dbReference type="SUPFAM" id="SSF56420">
    <property type="entry name" value="Peptide deformylase"/>
    <property type="match status" value="1"/>
</dbReference>
<proteinExistence type="inferred from homology"/>
<comment type="function">
    <text evidence="1">Removes the formyl group from the N-terminal Met of newly synthesized proteins. Requires at least a dipeptide for an efficient rate of reaction. N-terminal L-methionine is a prerequisite for activity but the enzyme has broad specificity at other positions.</text>
</comment>
<comment type="catalytic activity">
    <reaction evidence="1">
        <text>N-terminal N-formyl-L-methionyl-[peptide] + H2O = N-terminal L-methionyl-[peptide] + formate</text>
        <dbReference type="Rhea" id="RHEA:24420"/>
        <dbReference type="Rhea" id="RHEA-COMP:10639"/>
        <dbReference type="Rhea" id="RHEA-COMP:10640"/>
        <dbReference type="ChEBI" id="CHEBI:15377"/>
        <dbReference type="ChEBI" id="CHEBI:15740"/>
        <dbReference type="ChEBI" id="CHEBI:49298"/>
        <dbReference type="ChEBI" id="CHEBI:64731"/>
        <dbReference type="EC" id="3.5.1.88"/>
    </reaction>
</comment>
<comment type="cofactor">
    <cofactor evidence="1">
        <name>Fe(2+)</name>
        <dbReference type="ChEBI" id="CHEBI:29033"/>
    </cofactor>
    <text evidence="1">Binds 1 Fe(2+) ion.</text>
</comment>
<comment type="similarity">
    <text evidence="1">Belongs to the polypeptide deformylase family.</text>
</comment>
<reference key="1">
    <citation type="submission" date="2008-02" db="EMBL/GenBank/DDBJ databases">
        <title>Complete sequence of Escherichia coli C str. ATCC 8739.</title>
        <authorList>
            <person name="Copeland A."/>
            <person name="Lucas S."/>
            <person name="Lapidus A."/>
            <person name="Glavina del Rio T."/>
            <person name="Dalin E."/>
            <person name="Tice H."/>
            <person name="Bruce D."/>
            <person name="Goodwin L."/>
            <person name="Pitluck S."/>
            <person name="Kiss H."/>
            <person name="Brettin T."/>
            <person name="Detter J.C."/>
            <person name="Han C."/>
            <person name="Kuske C.R."/>
            <person name="Schmutz J."/>
            <person name="Larimer F."/>
            <person name="Land M."/>
            <person name="Hauser L."/>
            <person name="Kyrpides N."/>
            <person name="Mikhailova N."/>
            <person name="Ingram L."/>
            <person name="Richardson P."/>
        </authorList>
    </citation>
    <scope>NUCLEOTIDE SEQUENCE [LARGE SCALE GENOMIC DNA]</scope>
    <source>
        <strain>ATCC 8739 / DSM 1576 / NBRC 3972 / NCIMB 8545 / WDCM 00012 / Crooks</strain>
    </source>
</reference>
<feature type="chain" id="PRO_1000076943" description="Peptide deformylase">
    <location>
        <begin position="1"/>
        <end position="169"/>
    </location>
</feature>
<feature type="active site" evidence="1">
    <location>
        <position position="134"/>
    </location>
</feature>
<feature type="binding site" evidence="1">
    <location>
        <position position="91"/>
    </location>
    <ligand>
        <name>Fe cation</name>
        <dbReference type="ChEBI" id="CHEBI:24875"/>
    </ligand>
</feature>
<feature type="binding site" evidence="1">
    <location>
        <position position="133"/>
    </location>
    <ligand>
        <name>Fe cation</name>
        <dbReference type="ChEBI" id="CHEBI:24875"/>
    </ligand>
</feature>
<feature type="binding site" evidence="1">
    <location>
        <position position="137"/>
    </location>
    <ligand>
        <name>Fe cation</name>
        <dbReference type="ChEBI" id="CHEBI:24875"/>
    </ligand>
</feature>
<organism>
    <name type="scientific">Escherichia coli (strain ATCC 8739 / DSM 1576 / NBRC 3972 / NCIMB 8545 / WDCM 00012 / Crooks)</name>
    <dbReference type="NCBI Taxonomy" id="481805"/>
    <lineage>
        <taxon>Bacteria</taxon>
        <taxon>Pseudomonadati</taxon>
        <taxon>Pseudomonadota</taxon>
        <taxon>Gammaproteobacteria</taxon>
        <taxon>Enterobacterales</taxon>
        <taxon>Enterobacteriaceae</taxon>
        <taxon>Escherichia</taxon>
    </lineage>
</organism>
<evidence type="ECO:0000255" key="1">
    <source>
        <dbReference type="HAMAP-Rule" id="MF_00163"/>
    </source>
</evidence>
<gene>
    <name evidence="1" type="primary">def</name>
    <name type="ordered locus">EcolC_0427</name>
</gene>
<name>DEF_ECOLC</name>
<keyword id="KW-0378">Hydrolase</keyword>
<keyword id="KW-0408">Iron</keyword>
<keyword id="KW-0479">Metal-binding</keyword>
<keyword id="KW-0648">Protein biosynthesis</keyword>